<reference key="1">
    <citation type="submission" date="2008-10" db="EMBL/GenBank/DDBJ databases">
        <title>Genome sequence of Bacillus cereus AH820.</title>
        <authorList>
            <person name="Dodson R.J."/>
            <person name="Durkin A.S."/>
            <person name="Rosovitz M.J."/>
            <person name="Rasko D.A."/>
            <person name="Hoffmaster A."/>
            <person name="Ravel J."/>
            <person name="Sutton G."/>
        </authorList>
    </citation>
    <scope>NUCLEOTIDE SEQUENCE [LARGE SCALE GENOMIC DNA]</scope>
    <source>
        <strain>AH820</strain>
    </source>
</reference>
<keyword id="KW-0066">ATP synthesis</keyword>
<keyword id="KW-1003">Cell membrane</keyword>
<keyword id="KW-0139">CF(1)</keyword>
<keyword id="KW-0375">Hydrogen ion transport</keyword>
<keyword id="KW-0406">Ion transport</keyword>
<keyword id="KW-0472">Membrane</keyword>
<keyword id="KW-0813">Transport</keyword>
<comment type="function">
    <text evidence="1">F(1)F(0) ATP synthase produces ATP from ADP in the presence of a proton or sodium gradient. F-type ATPases consist of two structural domains, F(1) containing the extramembraneous catalytic core and F(0) containing the membrane proton channel, linked together by a central stalk and a peripheral stalk. During catalysis, ATP synthesis in the catalytic domain of F(1) is coupled via a rotary mechanism of the central stalk subunits to proton translocation.</text>
</comment>
<comment type="function">
    <text evidence="1">This protein is part of the stalk that links CF(0) to CF(1). It either transmits conformational changes from CF(0) to CF(1) or is implicated in proton conduction.</text>
</comment>
<comment type="subunit">
    <text evidence="1">F-type ATPases have 2 components, F(1) - the catalytic core - and F(0) - the membrane proton channel. F(1) has five subunits: alpha(3), beta(3), gamma(1), delta(1), epsilon(1). F(0) has three main subunits: a(1), b(2) and c(10-14). The alpha and beta chains form an alternating ring which encloses part of the gamma chain. F(1) is attached to F(0) by a central stalk formed by the gamma and epsilon chains, while a peripheral stalk is formed by the delta and b chains.</text>
</comment>
<comment type="subcellular location">
    <subcellularLocation>
        <location evidence="1">Cell membrane</location>
        <topology evidence="1">Peripheral membrane protein</topology>
    </subcellularLocation>
</comment>
<comment type="similarity">
    <text evidence="1">Belongs to the ATPase delta chain family.</text>
</comment>
<feature type="chain" id="PRO_1000184648" description="ATP synthase subunit delta">
    <location>
        <begin position="1"/>
        <end position="180"/>
    </location>
</feature>
<sequence length="180" mass="20487">MSNGIVAKRYAVALFKIAKEKHVLEMFEEELRLVQNVYEKNGELHSFLTQPNISKEQKKTFLANVFGSVSESILNTLYILIDNKRIDILSDIANEYVVLANEERNVADATVYSTRLLSEEEKLNIAEAFAKRTGKDAIRVKNVVDEDLLGGIKVRIGNRIYDGSLQGKLARIQRELMKNR</sequence>
<accession>B7JGN3</accession>
<evidence type="ECO:0000255" key="1">
    <source>
        <dbReference type="HAMAP-Rule" id="MF_01416"/>
    </source>
</evidence>
<protein>
    <recommendedName>
        <fullName evidence="1">ATP synthase subunit delta</fullName>
    </recommendedName>
    <alternativeName>
        <fullName evidence="1">ATP synthase F(1) sector subunit delta</fullName>
    </alternativeName>
    <alternativeName>
        <fullName evidence="1">F-type ATPase subunit delta</fullName>
        <shortName evidence="1">F-ATPase subunit delta</shortName>
    </alternativeName>
</protein>
<proteinExistence type="inferred from homology"/>
<gene>
    <name evidence="1" type="primary">atpH</name>
    <name type="ordered locus">BCAH820_5399</name>
</gene>
<dbReference type="EMBL" id="CP001283">
    <property type="protein sequence ID" value="ACK89733.1"/>
    <property type="molecule type" value="Genomic_DNA"/>
</dbReference>
<dbReference type="RefSeq" id="WP_000064678.1">
    <property type="nucleotide sequence ID" value="NC_011773.1"/>
</dbReference>
<dbReference type="SMR" id="B7JGN3"/>
<dbReference type="GeneID" id="45025138"/>
<dbReference type="KEGG" id="bcu:BCAH820_5399"/>
<dbReference type="HOGENOM" id="CLU_085114_4_1_9"/>
<dbReference type="Proteomes" id="UP000001363">
    <property type="component" value="Chromosome"/>
</dbReference>
<dbReference type="GO" id="GO:0005886">
    <property type="term" value="C:plasma membrane"/>
    <property type="evidence" value="ECO:0007669"/>
    <property type="project" value="UniProtKB-SubCell"/>
</dbReference>
<dbReference type="GO" id="GO:0045259">
    <property type="term" value="C:proton-transporting ATP synthase complex"/>
    <property type="evidence" value="ECO:0007669"/>
    <property type="project" value="UniProtKB-KW"/>
</dbReference>
<dbReference type="GO" id="GO:0046933">
    <property type="term" value="F:proton-transporting ATP synthase activity, rotational mechanism"/>
    <property type="evidence" value="ECO:0007669"/>
    <property type="project" value="UniProtKB-UniRule"/>
</dbReference>
<dbReference type="Gene3D" id="1.10.520.20">
    <property type="entry name" value="N-terminal domain of the delta subunit of the F1F0-ATP synthase"/>
    <property type="match status" value="1"/>
</dbReference>
<dbReference type="HAMAP" id="MF_01416">
    <property type="entry name" value="ATP_synth_delta_bact"/>
    <property type="match status" value="1"/>
</dbReference>
<dbReference type="InterPro" id="IPR026015">
    <property type="entry name" value="ATP_synth_OSCP/delta_N_sf"/>
</dbReference>
<dbReference type="InterPro" id="IPR020781">
    <property type="entry name" value="ATPase_OSCP/d_CS"/>
</dbReference>
<dbReference type="InterPro" id="IPR000711">
    <property type="entry name" value="ATPase_OSCP/dsu"/>
</dbReference>
<dbReference type="NCBIfam" id="TIGR01145">
    <property type="entry name" value="ATP_synt_delta"/>
    <property type="match status" value="1"/>
</dbReference>
<dbReference type="NCBIfam" id="NF004402">
    <property type="entry name" value="PRK05758.2-2"/>
    <property type="match status" value="1"/>
</dbReference>
<dbReference type="NCBIfam" id="NF004403">
    <property type="entry name" value="PRK05758.2-4"/>
    <property type="match status" value="1"/>
</dbReference>
<dbReference type="PANTHER" id="PTHR11910">
    <property type="entry name" value="ATP SYNTHASE DELTA CHAIN"/>
    <property type="match status" value="1"/>
</dbReference>
<dbReference type="Pfam" id="PF00213">
    <property type="entry name" value="OSCP"/>
    <property type="match status" value="1"/>
</dbReference>
<dbReference type="PRINTS" id="PR00125">
    <property type="entry name" value="ATPASEDELTA"/>
</dbReference>
<dbReference type="SUPFAM" id="SSF47928">
    <property type="entry name" value="N-terminal domain of the delta subunit of the F1F0-ATP synthase"/>
    <property type="match status" value="1"/>
</dbReference>
<dbReference type="PROSITE" id="PS00389">
    <property type="entry name" value="ATPASE_DELTA"/>
    <property type="match status" value="1"/>
</dbReference>
<name>ATPD_BACC0</name>
<organism>
    <name type="scientific">Bacillus cereus (strain AH820)</name>
    <dbReference type="NCBI Taxonomy" id="405535"/>
    <lineage>
        <taxon>Bacteria</taxon>
        <taxon>Bacillati</taxon>
        <taxon>Bacillota</taxon>
        <taxon>Bacilli</taxon>
        <taxon>Bacillales</taxon>
        <taxon>Bacillaceae</taxon>
        <taxon>Bacillus</taxon>
        <taxon>Bacillus cereus group</taxon>
    </lineage>
</organism>